<proteinExistence type="evidence at protein level"/>
<dbReference type="EC" id="2.3.1.-" evidence="8"/>
<dbReference type="EMBL" id="BK008910">
    <property type="protein sequence ID" value="DAA64703.1"/>
    <property type="molecule type" value="Genomic_DNA"/>
</dbReference>
<dbReference type="EMBL" id="EQ962655">
    <property type="protein sequence ID" value="EED18001.1"/>
    <property type="molecule type" value="Genomic_DNA"/>
</dbReference>
<dbReference type="RefSeq" id="XP_002481993.1">
    <property type="nucleotide sequence ID" value="XM_002481948.1"/>
</dbReference>
<dbReference type="SMR" id="B8M9J9"/>
<dbReference type="STRING" id="441959.B8M9J9"/>
<dbReference type="GeneID" id="8105833"/>
<dbReference type="VEuPathDB" id="FungiDB:TSTA_117750"/>
<dbReference type="eggNOG" id="KOG1178">
    <property type="taxonomic scope" value="Eukaryota"/>
</dbReference>
<dbReference type="eggNOG" id="KOG1202">
    <property type="taxonomic scope" value="Eukaryota"/>
</dbReference>
<dbReference type="HOGENOM" id="CLU_000022_6_2_1"/>
<dbReference type="InParanoid" id="B8M9J9"/>
<dbReference type="OrthoDB" id="329835at2759"/>
<dbReference type="PhylomeDB" id="B8M9J9"/>
<dbReference type="BioCyc" id="MetaCyc:MONOMER-19386"/>
<dbReference type="Proteomes" id="UP000001745">
    <property type="component" value="Unassembled WGS sequence"/>
</dbReference>
<dbReference type="GO" id="GO:0004315">
    <property type="term" value="F:3-oxoacyl-[acyl-carrier-protein] synthase activity"/>
    <property type="evidence" value="ECO:0007669"/>
    <property type="project" value="InterPro"/>
</dbReference>
<dbReference type="GO" id="GO:0008168">
    <property type="term" value="F:methyltransferase activity"/>
    <property type="evidence" value="ECO:0007669"/>
    <property type="project" value="UniProtKB-KW"/>
</dbReference>
<dbReference type="GO" id="GO:0031177">
    <property type="term" value="F:phosphopantetheine binding"/>
    <property type="evidence" value="ECO:0007669"/>
    <property type="project" value="InterPro"/>
</dbReference>
<dbReference type="GO" id="GO:0006633">
    <property type="term" value="P:fatty acid biosynthetic process"/>
    <property type="evidence" value="ECO:0007669"/>
    <property type="project" value="InterPro"/>
</dbReference>
<dbReference type="GO" id="GO:0032259">
    <property type="term" value="P:methylation"/>
    <property type="evidence" value="ECO:0007669"/>
    <property type="project" value="UniProtKB-KW"/>
</dbReference>
<dbReference type="CDD" id="cd02440">
    <property type="entry name" value="AdoMet_MTases"/>
    <property type="match status" value="1"/>
</dbReference>
<dbReference type="CDD" id="cd00833">
    <property type="entry name" value="PKS"/>
    <property type="match status" value="1"/>
</dbReference>
<dbReference type="Gene3D" id="3.30.70.3290">
    <property type="match status" value="1"/>
</dbReference>
<dbReference type="Gene3D" id="3.40.47.10">
    <property type="match status" value="1"/>
</dbReference>
<dbReference type="Gene3D" id="1.10.1200.10">
    <property type="entry name" value="ACP-like"/>
    <property type="match status" value="2"/>
</dbReference>
<dbReference type="Gene3D" id="3.40.366.10">
    <property type="entry name" value="Malonyl-Coenzyme A Acyl Carrier Protein, domain 2"/>
    <property type="match status" value="2"/>
</dbReference>
<dbReference type="Gene3D" id="3.40.50.720">
    <property type="entry name" value="NAD(P)-binding Rossmann-like Domain"/>
    <property type="match status" value="1"/>
</dbReference>
<dbReference type="Gene3D" id="3.10.129.110">
    <property type="entry name" value="Polyketide synthase dehydratase"/>
    <property type="match status" value="1"/>
</dbReference>
<dbReference type="Gene3D" id="3.40.50.150">
    <property type="entry name" value="Vaccinia Virus protein VP39"/>
    <property type="match status" value="1"/>
</dbReference>
<dbReference type="InterPro" id="IPR001227">
    <property type="entry name" value="Ac_transferase_dom_sf"/>
</dbReference>
<dbReference type="InterPro" id="IPR036736">
    <property type="entry name" value="ACP-like_sf"/>
</dbReference>
<dbReference type="InterPro" id="IPR014043">
    <property type="entry name" value="Acyl_transferase_dom"/>
</dbReference>
<dbReference type="InterPro" id="IPR016035">
    <property type="entry name" value="Acyl_Trfase/lysoPLipase"/>
</dbReference>
<dbReference type="InterPro" id="IPR013120">
    <property type="entry name" value="Far_NAD-bd"/>
</dbReference>
<dbReference type="InterPro" id="IPR018201">
    <property type="entry name" value="Ketoacyl_synth_AS"/>
</dbReference>
<dbReference type="InterPro" id="IPR014031">
    <property type="entry name" value="Ketoacyl_synth_C"/>
</dbReference>
<dbReference type="InterPro" id="IPR014030">
    <property type="entry name" value="Ketoacyl_synth_N"/>
</dbReference>
<dbReference type="InterPro" id="IPR016036">
    <property type="entry name" value="Malonyl_transacylase_ACP-bd"/>
</dbReference>
<dbReference type="InterPro" id="IPR013217">
    <property type="entry name" value="Methyltransf_12"/>
</dbReference>
<dbReference type="InterPro" id="IPR036291">
    <property type="entry name" value="NAD(P)-bd_dom_sf"/>
</dbReference>
<dbReference type="InterPro" id="IPR020841">
    <property type="entry name" value="PKS_Beta-ketoAc_synthase_dom"/>
</dbReference>
<dbReference type="InterPro" id="IPR042104">
    <property type="entry name" value="PKS_dehydratase_sf"/>
</dbReference>
<dbReference type="InterPro" id="IPR049900">
    <property type="entry name" value="PKS_mFAS_DH"/>
</dbReference>
<dbReference type="InterPro" id="IPR020806">
    <property type="entry name" value="PKS_PP-bd"/>
</dbReference>
<dbReference type="InterPro" id="IPR050444">
    <property type="entry name" value="Polyketide_Synthase"/>
</dbReference>
<dbReference type="InterPro" id="IPR009081">
    <property type="entry name" value="PP-bd_ACP"/>
</dbReference>
<dbReference type="InterPro" id="IPR006162">
    <property type="entry name" value="Ppantetheine_attach_site"/>
</dbReference>
<dbReference type="InterPro" id="IPR029063">
    <property type="entry name" value="SAM-dependent_MTases_sf"/>
</dbReference>
<dbReference type="InterPro" id="IPR032088">
    <property type="entry name" value="SAT"/>
</dbReference>
<dbReference type="InterPro" id="IPR016039">
    <property type="entry name" value="Thiolase-like"/>
</dbReference>
<dbReference type="PANTHER" id="PTHR45681:SF6">
    <property type="entry name" value="POLYKETIDE SYNTHASE 37"/>
    <property type="match status" value="1"/>
</dbReference>
<dbReference type="PANTHER" id="PTHR45681">
    <property type="entry name" value="POLYKETIDE SYNTHASE 44-RELATED"/>
    <property type="match status" value="1"/>
</dbReference>
<dbReference type="Pfam" id="PF00698">
    <property type="entry name" value="Acyl_transf_1"/>
    <property type="match status" value="1"/>
</dbReference>
<dbReference type="Pfam" id="PF18558">
    <property type="entry name" value="HTH_51"/>
    <property type="match status" value="1"/>
</dbReference>
<dbReference type="Pfam" id="PF00109">
    <property type="entry name" value="ketoacyl-synt"/>
    <property type="match status" value="1"/>
</dbReference>
<dbReference type="Pfam" id="PF02801">
    <property type="entry name" value="Ketoacyl-synt_C"/>
    <property type="match status" value="1"/>
</dbReference>
<dbReference type="Pfam" id="PF08242">
    <property type="entry name" value="Methyltransf_12"/>
    <property type="match status" value="1"/>
</dbReference>
<dbReference type="Pfam" id="PF07993">
    <property type="entry name" value="NAD_binding_4"/>
    <property type="match status" value="1"/>
</dbReference>
<dbReference type="Pfam" id="PF00550">
    <property type="entry name" value="PP-binding"/>
    <property type="match status" value="2"/>
</dbReference>
<dbReference type="Pfam" id="PF16073">
    <property type="entry name" value="SAT"/>
    <property type="match status" value="1"/>
</dbReference>
<dbReference type="SMART" id="SM00827">
    <property type="entry name" value="PKS_AT"/>
    <property type="match status" value="1"/>
</dbReference>
<dbReference type="SMART" id="SM00825">
    <property type="entry name" value="PKS_KS"/>
    <property type="match status" value="1"/>
</dbReference>
<dbReference type="SMART" id="SM00823">
    <property type="entry name" value="PKS_PP"/>
    <property type="match status" value="2"/>
</dbReference>
<dbReference type="SMART" id="SM01294">
    <property type="entry name" value="PKS_PP_betabranch"/>
    <property type="match status" value="1"/>
</dbReference>
<dbReference type="SUPFAM" id="SSF47336">
    <property type="entry name" value="ACP-like"/>
    <property type="match status" value="2"/>
</dbReference>
<dbReference type="SUPFAM" id="SSF52151">
    <property type="entry name" value="FabD/lysophospholipase-like"/>
    <property type="match status" value="1"/>
</dbReference>
<dbReference type="SUPFAM" id="SSF51735">
    <property type="entry name" value="NAD(P)-binding Rossmann-fold domains"/>
    <property type="match status" value="1"/>
</dbReference>
<dbReference type="SUPFAM" id="SSF55048">
    <property type="entry name" value="Probable ACP-binding domain of malonyl-CoA ACP transacylase"/>
    <property type="match status" value="1"/>
</dbReference>
<dbReference type="SUPFAM" id="SSF53335">
    <property type="entry name" value="S-adenosyl-L-methionine-dependent methyltransferases"/>
    <property type="match status" value="1"/>
</dbReference>
<dbReference type="SUPFAM" id="SSF53901">
    <property type="entry name" value="Thiolase-like"/>
    <property type="match status" value="1"/>
</dbReference>
<dbReference type="PROSITE" id="PS50075">
    <property type="entry name" value="CARRIER"/>
    <property type="match status" value="2"/>
</dbReference>
<dbReference type="PROSITE" id="PS00606">
    <property type="entry name" value="KS3_1"/>
    <property type="match status" value="1"/>
</dbReference>
<dbReference type="PROSITE" id="PS52004">
    <property type="entry name" value="KS3_2"/>
    <property type="match status" value="1"/>
</dbReference>
<dbReference type="PROSITE" id="PS00012">
    <property type="entry name" value="PHOSPHOPANTETHEINE"/>
    <property type="match status" value="2"/>
</dbReference>
<dbReference type="PROSITE" id="PS52019">
    <property type="entry name" value="PKS_MFAS_DH"/>
    <property type="match status" value="1"/>
</dbReference>
<sequence length="2661" mass="293856">MDPLASNFRGETVLLFGSQSLSFDANTFNAIRSSLEKEEYLRWIRHTVADLPSALNTALQHVPHLKGSEEWAFSAVQELNDWLDSGHQPNSLDPSALPNTILTPLVVILHLSQYMKYLISANDYQDDTLLSKRQQETCETLGLCTGLLSSLAVSSSRTRLQLERYGSVAIRLAMLIGLIVDARDRSTSHGPSQSTAALWHSEEQKEKLLEILAANPEAYISVYYDQNRATITIPTAQTATIRKDLASAGLTTTEIGLRGRFHWSGHEAEVDQLIKLCDIDKRFQFTQKTALVLPNRSFDSEPHVHQGPLHAMALWSILVNPPEWQKTVSAVYASTLVSTTAKVVSFGQERCVPPTILQNLDSRVFYMGDLEKTSSPRPRGDDIAIVGASIKVAGADDLEEFWEILSKGISQHKEVPPERFTFDTVYRDRDPKTKWYGNFLNDPDKFDHKFFKKSPREAESMDPQQRLLLQIAYQALEKGGYFHNAGPDQRIGCYMGVCAVDYENNLACYAPNAFTATSHLRGFIAGKVSHYFGWTGPALTIDTACSSSAVAVHLACQAILKGECTAALAGGTQILTSPLWFQNLAGASFLSKTGQCKPFDSKADGYCRGEAVGAVFLKKMSAALADGDQILGVISGTAVQQNENCTPIVVPNKPSLSDMFQSVIEKARLQPDHITVVEAHGTGTAVGDPVEYASVRDTLGGSKRTKKLFLGSAKGLVGHCESASGIISLVKVLLMIQKGMIPPQASFNTLNPATKATPADGIEISRQLTEWNAPFRAALINNYGASGSNASMVITQAPRATTTIPGGNEMERVPFWFSALNEKSLQAYAAEFLKYLKANHGQLSLPDLGFNVSRQSNRSLPRRLLFTCQSTNELQQRLEEYVKGDSKTSSSECPATRPLVLCFGGQVSTFIGLSRQVYEDVALLRGHLNSCNRRCLALGLRGIFPAIFQKGPIEDIVTLQLSLFAMQYSCAKSWIDAGAQPVAVLGHSFGELTALCVSGVLSLDDALRMIAARAQIIRDSWGSDGGSMMALEADLDVVQKLLATSNANLPENEVAVIACYNGPRSFTIAGPRRAIDALDTSRQASPEFASIKAKRLDVTNAFHSTLVEPLRNKLTEATKELNFRERGTIHLERSTETRSEKLIDNPGSYVADHMRNPVFFHHALQRLDNQFPNAIYLEAGSSSTITNMASRALGGSGGRHFQAMSITTDKGLDNLIDATMSLWNAGLNVRFWKQAFVETENYKPLLLPPYQFEKSRHWLELKEPPKPEIITMSAGGQRTDKAPDTILSFVGYQDSNKSHARFRLNTENREYQELMKAHLIVYTAPICPATVQMDIAIEGLKTLVPGIGSEVQPQIHNVDNQTPICADKSQSIWLDMKLADEPSKISWRFRFFGTSLDNDKMPSNKQADAGVTFTLGTLVVVPMEDEQTKLDLTRYDLLTGHKRCVELLHSTEAEEILQGRTIYKTFADIVDYGEQYRGLQRLIGHGNNSVGRVVRAYNPKTWFDAHLSDAYAQVVGIWLNCMTEHDAEELYVARGFEKWIRSPDIQPTSRPDSYDVLAYHKGPSRNSCLSDIFVFHPKTGQLIEAILGFQFVRIPRKGLAKLLTRLTRDETALATNAQSRAIPPPSTNTTQSSSQQTPIPKAAAPKKEKKRPGNPKLDVLPKLITILADLVGLEPEEITINSELADIGVDSLMAMEVVTEIERVFSCSVPLDDVADVTTMSQLVRVVESIVGMEGSETSNLSSDDDDENGTPSTPETDLSDASVDAVVDNAELIAYFAESLGMDASEISANVQLKELGVDSLLSMELGGELVEKFGLNLNESTVLEDMTINDLRQTAPGAAAPKVAESTITSAPQVTTSKAVPLTNGTSFNIPVETILSAFKETKAAGDSFITATGCRGYVEQVLPEQTLLCALHTLEAFEKMGSSIRTLKAGDTMTLFTPRPEYVSLIERLTEMLETQIGLIKVIGGPGLTIERTQTPYPTASSTVLMQEMRQKYPQYQNVNELIFYVGSNLDRALRGETDGIKLIFGCAQGRELVSGLYGDWIMNICYYRQMEDFLIRLIAKLPSNEPLRILEMGAGTGGTSKWLLPLLARLGCPVEYTFTDLAPSLVAGARKTFKQYASFMKFRAHDIEQEPAEDLLGTQHMVVASNAVHATVSLVESAKKLRKVLRPNGILMMLEMIEPLYWIDMIFGLFEGWWLFADGRKHALTPPARWKTDLQAAGFGRVDWSDGNLPENSINKVIIAVACEPEKPEELDRKSVVDEFVHKYTQGVDLLSPAIRVNRKSLGHAVLVTGGTGSVGAHVVAHLAQQPFVTKVICLNRRGKLDARQRQLESLAQKGLQLSDESLAKIQVYETDLSKPQLGLSPEMYLSLLESTTDIIHNAWPMSIKRQVQGFEAQFRIMRNLIEFARDISLGGGDPLGFQFISSIATVGHYPLWKQEIRVPEDRLPLDAVLPIGYGDAKYICELMLDKTLHTYPHRFRVSTVRLGQVGGSKISGYWNPVEHLSFLFKSAQTIQQLPDLHGPLSWTPVDDVAKSLVDLLFTEKPYPVYHIENPITQPWQEMIPILADALGIPRGNRLSLKDWVARVREFPEDPTDKDKNPATALVDFFEQDFERMSVGGLLLDTTKSREHSPSLRAVGPITPDLVRKFISYWRSISFVA</sequence>
<accession>B8M9J9</accession>
<gene>
    <name evidence="10" type="primary">tropA</name>
    <name evidence="10" type="synonym">tspks1</name>
    <name type="ORF">TSTA_117750</name>
</gene>
<evidence type="ECO:0000250" key="1">
    <source>
        <dbReference type="UniProtKB" id="Q5ATJ7"/>
    </source>
</evidence>
<evidence type="ECO:0000255" key="2"/>
<evidence type="ECO:0000255" key="3">
    <source>
        <dbReference type="PROSITE-ProRule" id="PRU00258"/>
    </source>
</evidence>
<evidence type="ECO:0000255" key="4">
    <source>
        <dbReference type="PROSITE-ProRule" id="PRU01348"/>
    </source>
</evidence>
<evidence type="ECO:0000255" key="5">
    <source>
        <dbReference type="PROSITE-ProRule" id="PRU01363"/>
    </source>
</evidence>
<evidence type="ECO:0000255" key="6">
    <source>
        <dbReference type="PROSITE-ProRule" id="PRU10022"/>
    </source>
</evidence>
<evidence type="ECO:0000256" key="7">
    <source>
        <dbReference type="SAM" id="MobiDB-lite"/>
    </source>
</evidence>
<evidence type="ECO:0000269" key="8">
    <source>
    </source>
</evidence>
<evidence type="ECO:0000269" key="9">
    <source>
    </source>
</evidence>
<evidence type="ECO:0000303" key="10">
    <source>
    </source>
</evidence>
<evidence type="ECO:0000305" key="11"/>
<reference key="1">
    <citation type="journal article" date="2012" name="Proc. Natl. Acad. Sci. U.S.A.">
        <title>Genetic, molecular, and biochemical basis of fungal tropolone biosynthesis.</title>
        <authorList>
            <person name="Davison J."/>
            <person name="al Fahad A."/>
            <person name="Cai M."/>
            <person name="Song Z."/>
            <person name="Yehia S.Y."/>
            <person name="Lazarus C.M."/>
            <person name="Bailey A.M."/>
            <person name="Simpson T.J."/>
            <person name="Cox R.J."/>
        </authorList>
    </citation>
    <scope>NUCLEOTIDE SEQUENCE [GENOMIC DNA]</scope>
    <scope>FUNCTION</scope>
    <scope>DISRUPTION PHENOTYPE</scope>
    <scope>CATALYTIC ACTIVITY</scope>
    <source>
        <strain>ATCC 10500 / CBS 375.48 / QM 6759 / NRRL 1006</strain>
    </source>
</reference>
<reference key="2">
    <citation type="journal article" date="2014" name="Angew. Chem. Int. Ed.">
        <title>The biosynthesis and catabolism of the maleic anhydride moiety of stipitatonic acid.</title>
        <authorList>
            <person name="al Fahad A."/>
            <person name="Abood A."/>
            <person name="Simpson T.J."/>
            <person name="Cox R.J."/>
        </authorList>
    </citation>
    <scope>NUCLEOTIDE SEQUENCE [GENOMIC DNA]</scope>
    <source>
        <strain>ATCC 10500 / CBS 375.48 / QM 6759 / NRRL 1006</strain>
    </source>
</reference>
<reference key="3">
    <citation type="journal article" date="2015" name="Genome Announc.">
        <title>Genome sequence of the AIDS-associated pathogen Penicillium marneffei (ATCC18224) and its near taxonomic relative Talaromyces stipitatus (ATCC10500).</title>
        <authorList>
            <person name="Nierman W.C."/>
            <person name="Fedorova-Abrams N.D."/>
            <person name="Andrianopoulos A."/>
        </authorList>
    </citation>
    <scope>NUCLEOTIDE SEQUENCE [LARGE SCALE GENOMIC DNA]</scope>
    <source>
        <strain>ATCC 10500 / CBS 375.48 / QM 6759 / NRRL 1006</strain>
    </source>
</reference>
<protein>
    <recommendedName>
        <fullName evidence="10">3-methylorcinaldehyde synthase tropA</fullName>
        <shortName evidence="10">MOS</shortName>
        <ecNumber evidence="8">2.3.1.-</ecNumber>
    </recommendedName>
    <alternativeName>
        <fullName evidence="10">Non-reducing polyketide synthase tropA</fullName>
    </alternativeName>
    <alternativeName>
        <fullName evidence="10">Tropolone synthesis protein A</fullName>
    </alternativeName>
</protein>
<feature type="chain" id="PRO_0000437127" description="3-methylorcinaldehyde synthase tropA">
    <location>
        <begin position="1"/>
        <end position="2661"/>
    </location>
</feature>
<feature type="domain" description="Ketosynthase family 3 (KS3)" evidence="4">
    <location>
        <begin position="380"/>
        <end position="796"/>
    </location>
</feature>
<feature type="domain" description="PKS/mFAS DH" evidence="5">
    <location>
        <begin position="1283"/>
        <end position="1600"/>
    </location>
</feature>
<feature type="domain" description="Carrier 1" evidence="3">
    <location>
        <begin position="1654"/>
        <end position="1731"/>
    </location>
</feature>
<feature type="domain" description="Carrier 2" evidence="3">
    <location>
        <begin position="1764"/>
        <end position="1841"/>
    </location>
</feature>
<feature type="region of interest" description="N-terminal acylcarrier protein transacylase domain (SAT)" evidence="2">
    <location>
        <begin position="14"/>
        <end position="271"/>
    </location>
</feature>
<feature type="region of interest" description="Malonyl-CoA:ACP transacylase (MAT) domain" evidence="2">
    <location>
        <begin position="901"/>
        <end position="1211"/>
    </location>
</feature>
<feature type="region of interest" description="N-terminal hotdog fold" evidence="5">
    <location>
        <begin position="1283"/>
        <end position="1425"/>
    </location>
</feature>
<feature type="region of interest" description="Product template (PT) domain" evidence="2">
    <location>
        <begin position="1288"/>
        <end position="1599"/>
    </location>
</feature>
<feature type="region of interest" description="C-terminal hotdog fold" evidence="5">
    <location>
        <begin position="1453"/>
        <end position="1600"/>
    </location>
</feature>
<feature type="region of interest" description="Disordered" evidence="7">
    <location>
        <begin position="1614"/>
        <end position="1656"/>
    </location>
</feature>
<feature type="region of interest" description="Disordered" evidence="7">
    <location>
        <begin position="1734"/>
        <end position="1762"/>
    </location>
</feature>
<feature type="region of interest" description="Methyltransferase (CMeT) domain" evidence="2">
    <location>
        <begin position="1998"/>
        <end position="2231"/>
    </location>
</feature>
<feature type="region of interest" description="Thioesterase (TE) domain" evidence="1">
    <location>
        <begin position="2271"/>
        <end position="2659"/>
    </location>
</feature>
<feature type="compositionally biased region" description="Low complexity" evidence="7">
    <location>
        <begin position="1627"/>
        <end position="1643"/>
    </location>
</feature>
<feature type="active site" description="For beta-ketoacyl synthase activity" evidence="4">
    <location>
        <position position="545"/>
    </location>
</feature>
<feature type="active site" description="For beta-ketoacyl synthase activity" evidence="4">
    <location>
        <position position="680"/>
    </location>
</feature>
<feature type="active site" description="For beta-ketoacyl synthase activity" evidence="4">
    <location>
        <position position="719"/>
    </location>
</feature>
<feature type="active site" description="For acyl/malonyl transferase activity" evidence="6">
    <location>
        <position position="988"/>
    </location>
</feature>
<feature type="active site" description="Proton acceptor; for dehydratase activity" evidence="5">
    <location>
        <position position="1318"/>
    </location>
</feature>
<feature type="active site" description="Proton donor; for dehydratase activity" evidence="5">
    <location>
        <position position="1509"/>
    </location>
</feature>
<feature type="modified residue" description="O-(pantetheine 4'-phosphoryl)serine" evidence="3">
    <location>
        <position position="1691"/>
    </location>
</feature>
<feature type="modified residue" description="O-(pantetheine 4'-phosphoryl)serine" evidence="3">
    <location>
        <position position="1801"/>
    </location>
</feature>
<comment type="function">
    <text evidence="8 9">Non-reducing polyketide synthase; part of the gene cluster that mediates the biosynthesis of the tropolone class of fungal maleic anhydrides (PubMed:22508998, PubMed:24863423). The pathway begins with the synthesis of 3-methylorcinaldehyde by the non-reducing polyketide synthase (PKS) tropA (PubMed:22508998). 3-methylorcinaldehyde is the substrate for the FAD-dependent monooxygenase tropB to yield a dearomatized hydroxycyclohexadione (PubMed:22508998, PubMed:24863423). The 2-oxoglutarate-dependent dioxygenase tropC then performs the oxidative ring expansion to provide the first tropolone metabolite stipitaldehyde (PubMed:22508998, PubMed:24863423). Trop D converts stipitaldehyde into stipitacetal which is in turn converted to stipitalide by the short-chain dehydrogenase/reductase tropE (PubMed:24863423). The next steps involve tropF, tropG, tropH, tropI and tropJ to form successive tropolone maleic anhydrides including stipitaldehydic, stipitatonic and stipitatic acids (PubMed:24863423).</text>
</comment>
<comment type="pathway">
    <text evidence="8">Secondary metabolite biosynthesis.</text>
</comment>
<comment type="domain">
    <text evidence="11">Multidomain protein; including a starter unit:ACP transacylase (SAT) that selects the starter unit; a ketosynthase (KS) that catalyzes repeated decarboxylative condensation to elongate the polyketide backbone; a malonyl-CoA:ACP transacylase (MAT) that selects and transfers the extender unit malonyl-CoA; a product template (PT) domain that controls the immediate cyclization regioselectivity of the reactive polyketide backbone; and an acyl-carrier protein (ACP) that serves as the tether of the growing and completed polyketide via its phosphopantetheinyl arm.</text>
</comment>
<comment type="domain">
    <text evidence="11">The release of the polyketide chain from the non-reducing polyketide synthase is mediated by the thioesterase (TE) domain localized at the C-ter of the protein.</text>
</comment>
<comment type="disruption phenotype">
    <text evidence="8">Impairs the production of tropolones (PubMed:22508998).</text>
</comment>
<keyword id="KW-0012">Acyltransferase</keyword>
<keyword id="KW-0489">Methyltransferase</keyword>
<keyword id="KW-0511">Multifunctional enzyme</keyword>
<keyword id="KW-0596">Phosphopantetheine</keyword>
<keyword id="KW-0597">Phosphoprotein</keyword>
<keyword id="KW-1185">Reference proteome</keyword>
<keyword id="KW-0677">Repeat</keyword>
<keyword id="KW-0808">Transferase</keyword>
<name>TROPA_TALSN</name>
<organism>
    <name type="scientific">Talaromyces stipitatus (strain ATCC 10500 / CBS 375.48 / QM 6759 / NRRL 1006)</name>
    <name type="common">Penicillium stipitatum</name>
    <dbReference type="NCBI Taxonomy" id="441959"/>
    <lineage>
        <taxon>Eukaryota</taxon>
        <taxon>Fungi</taxon>
        <taxon>Dikarya</taxon>
        <taxon>Ascomycota</taxon>
        <taxon>Pezizomycotina</taxon>
        <taxon>Eurotiomycetes</taxon>
        <taxon>Eurotiomycetidae</taxon>
        <taxon>Eurotiales</taxon>
        <taxon>Trichocomaceae</taxon>
        <taxon>Talaromyces</taxon>
        <taxon>Talaromyces sect. Talaromyces</taxon>
    </lineage>
</organism>